<organism>
    <name type="scientific">Trichormus variabilis (strain ATCC 29413 / PCC 7937)</name>
    <name type="common">Anabaena variabilis</name>
    <dbReference type="NCBI Taxonomy" id="240292"/>
    <lineage>
        <taxon>Bacteria</taxon>
        <taxon>Bacillati</taxon>
        <taxon>Cyanobacteriota</taxon>
        <taxon>Cyanophyceae</taxon>
        <taxon>Nostocales</taxon>
        <taxon>Nostocaceae</taxon>
        <taxon>Trichormus</taxon>
    </lineage>
</organism>
<proteinExistence type="inferred from homology"/>
<name>HEMH_TRIV2</name>
<comment type="function">
    <text evidence="1">Catalyzes the ferrous insertion into protoporphyrin IX.</text>
</comment>
<comment type="catalytic activity">
    <reaction evidence="1">
        <text>heme b + 2 H(+) = protoporphyrin IX + Fe(2+)</text>
        <dbReference type="Rhea" id="RHEA:22584"/>
        <dbReference type="ChEBI" id="CHEBI:15378"/>
        <dbReference type="ChEBI" id="CHEBI:29033"/>
        <dbReference type="ChEBI" id="CHEBI:57306"/>
        <dbReference type="ChEBI" id="CHEBI:60344"/>
        <dbReference type="EC" id="4.98.1.1"/>
    </reaction>
</comment>
<comment type="pathway">
    <text evidence="1">Porphyrin-containing compound metabolism; protoheme biosynthesis; protoheme from protoporphyrin-IX: step 1/1.</text>
</comment>
<comment type="subcellular location">
    <subcellularLocation>
        <location evidence="1">Cytoplasm</location>
    </subcellularLocation>
</comment>
<comment type="similarity">
    <text evidence="1">Belongs to the ferrochelatase family.</text>
</comment>
<evidence type="ECO:0000255" key="1">
    <source>
        <dbReference type="HAMAP-Rule" id="MF_00323"/>
    </source>
</evidence>
<gene>
    <name evidence="1" type="primary">hemH</name>
    <name type="ordered locus">Ava_1574</name>
</gene>
<feature type="chain" id="PRO_1000019272" description="Ferrochelatase">
    <location>
        <begin position="1"/>
        <end position="388"/>
    </location>
</feature>
<feature type="binding site" evidence="1">
    <location>
        <position position="196"/>
    </location>
    <ligand>
        <name>Fe cation</name>
        <dbReference type="ChEBI" id="CHEBI:24875"/>
    </ligand>
</feature>
<feature type="binding site" evidence="1">
    <location>
        <position position="277"/>
    </location>
    <ligand>
        <name>Fe cation</name>
        <dbReference type="ChEBI" id="CHEBI:24875"/>
    </ligand>
</feature>
<keyword id="KW-0963">Cytoplasm</keyword>
<keyword id="KW-0350">Heme biosynthesis</keyword>
<keyword id="KW-0408">Iron</keyword>
<keyword id="KW-0456">Lyase</keyword>
<keyword id="KW-0479">Metal-binding</keyword>
<keyword id="KW-0627">Porphyrin biosynthesis</keyword>
<dbReference type="EC" id="4.98.1.1" evidence="1"/>
<dbReference type="EMBL" id="CP000117">
    <property type="protein sequence ID" value="ABA21197.1"/>
    <property type="molecule type" value="Genomic_DNA"/>
</dbReference>
<dbReference type="SMR" id="Q3MCT9"/>
<dbReference type="STRING" id="240292.Ava_1574"/>
<dbReference type="KEGG" id="ava:Ava_1574"/>
<dbReference type="eggNOG" id="COG0276">
    <property type="taxonomic scope" value="Bacteria"/>
</dbReference>
<dbReference type="HOGENOM" id="CLU_018884_4_3_3"/>
<dbReference type="UniPathway" id="UPA00252">
    <property type="reaction ID" value="UER00325"/>
</dbReference>
<dbReference type="Proteomes" id="UP000002533">
    <property type="component" value="Chromosome"/>
</dbReference>
<dbReference type="GO" id="GO:0005737">
    <property type="term" value="C:cytoplasm"/>
    <property type="evidence" value="ECO:0007669"/>
    <property type="project" value="UniProtKB-SubCell"/>
</dbReference>
<dbReference type="GO" id="GO:0004325">
    <property type="term" value="F:ferrochelatase activity"/>
    <property type="evidence" value="ECO:0007669"/>
    <property type="project" value="UniProtKB-UniRule"/>
</dbReference>
<dbReference type="GO" id="GO:0046872">
    <property type="term" value="F:metal ion binding"/>
    <property type="evidence" value="ECO:0007669"/>
    <property type="project" value="UniProtKB-KW"/>
</dbReference>
<dbReference type="GO" id="GO:0006783">
    <property type="term" value="P:heme biosynthetic process"/>
    <property type="evidence" value="ECO:0007669"/>
    <property type="project" value="UniProtKB-UniRule"/>
</dbReference>
<dbReference type="CDD" id="cd00419">
    <property type="entry name" value="Ferrochelatase_C"/>
    <property type="match status" value="1"/>
</dbReference>
<dbReference type="CDD" id="cd03411">
    <property type="entry name" value="Ferrochelatase_N"/>
    <property type="match status" value="1"/>
</dbReference>
<dbReference type="FunFam" id="3.40.50.1400:FF:000006">
    <property type="entry name" value="Ferrochelatase"/>
    <property type="match status" value="1"/>
</dbReference>
<dbReference type="Gene3D" id="3.40.50.1400">
    <property type="match status" value="2"/>
</dbReference>
<dbReference type="HAMAP" id="MF_00323">
    <property type="entry name" value="Ferrochelatase"/>
    <property type="match status" value="1"/>
</dbReference>
<dbReference type="InterPro" id="IPR001015">
    <property type="entry name" value="Ferrochelatase"/>
</dbReference>
<dbReference type="InterPro" id="IPR019772">
    <property type="entry name" value="Ferrochelatase_AS"/>
</dbReference>
<dbReference type="InterPro" id="IPR033644">
    <property type="entry name" value="Ferrochelatase_C"/>
</dbReference>
<dbReference type="InterPro" id="IPR033659">
    <property type="entry name" value="Ferrochelatase_N"/>
</dbReference>
<dbReference type="NCBIfam" id="TIGR00109">
    <property type="entry name" value="hemH"/>
    <property type="match status" value="1"/>
</dbReference>
<dbReference type="PANTHER" id="PTHR11108">
    <property type="entry name" value="FERROCHELATASE"/>
    <property type="match status" value="1"/>
</dbReference>
<dbReference type="PANTHER" id="PTHR11108:SF1">
    <property type="entry name" value="FERROCHELATASE, MITOCHONDRIAL"/>
    <property type="match status" value="1"/>
</dbReference>
<dbReference type="Pfam" id="PF00762">
    <property type="entry name" value="Ferrochelatase"/>
    <property type="match status" value="1"/>
</dbReference>
<dbReference type="SUPFAM" id="SSF53800">
    <property type="entry name" value="Chelatase"/>
    <property type="match status" value="1"/>
</dbReference>
<dbReference type="SUPFAM" id="SSF103511">
    <property type="entry name" value="Chlorophyll a-b binding protein"/>
    <property type="match status" value="1"/>
</dbReference>
<dbReference type="PROSITE" id="PS00534">
    <property type="entry name" value="FERROCHELATASE"/>
    <property type="match status" value="1"/>
</dbReference>
<sequence>MGRVGVLLLNLGGPDKLEDVGPFLFNLFSDPEIIRLPFRWLQKPLAWFIASRRTKTSQENYKQIGGGSPLRRITEAQGEALKEQLHDLGQEANIYVGMRYWHPYTEEAIALLTQDNLDNLVILPLYPQFSISTSGSSFRLLERLWQEDPKLQRLDYTVIPSWYKEPCYLQAMAELISQEVDQFPDPDQVHVFFSAHGVPKSYVEEAGDPYQQEIEECTALIMQTLNRPNPHTLAYQSRVGPVEWLQPYTEDALKELGAQGVKDLVVVPISFVSEHIETLQEIDIEYREIAEEAGIHNFRRVAAPNTHPVFIRALANLVIDALNKPSFKLSQAAQIKKMVKMYPPESWEWGMTSSAEVWNGRIAMLGFIALIIELVTGQGLLHMIGLLQ</sequence>
<protein>
    <recommendedName>
        <fullName evidence="1">Ferrochelatase</fullName>
        <ecNumber evidence="1">4.98.1.1</ecNumber>
    </recommendedName>
    <alternativeName>
        <fullName evidence="1">Heme synthase</fullName>
    </alternativeName>
    <alternativeName>
        <fullName evidence="1">Protoheme ferro-lyase</fullName>
    </alternativeName>
</protein>
<reference key="1">
    <citation type="journal article" date="2014" name="Stand. Genomic Sci.">
        <title>Complete genome sequence of Anabaena variabilis ATCC 29413.</title>
        <authorList>
            <person name="Thiel T."/>
            <person name="Pratte B.S."/>
            <person name="Zhong J."/>
            <person name="Goodwin L."/>
            <person name="Copeland A."/>
            <person name="Lucas S."/>
            <person name="Han C."/>
            <person name="Pitluck S."/>
            <person name="Land M.L."/>
            <person name="Kyrpides N.C."/>
            <person name="Woyke T."/>
        </authorList>
    </citation>
    <scope>NUCLEOTIDE SEQUENCE [LARGE SCALE GENOMIC DNA]</scope>
    <source>
        <strain>ATCC 29413 / PCC 7937</strain>
    </source>
</reference>
<accession>Q3MCT9</accession>